<name>NQRB_NEIMB</name>
<reference key="1">
    <citation type="journal article" date="2000" name="Science">
        <title>Complete genome sequence of Neisseria meningitidis serogroup B strain MC58.</title>
        <authorList>
            <person name="Tettelin H."/>
            <person name="Saunders N.J."/>
            <person name="Heidelberg J.F."/>
            <person name="Jeffries A.C."/>
            <person name="Nelson K.E."/>
            <person name="Eisen J.A."/>
            <person name="Ketchum K.A."/>
            <person name="Hood D.W."/>
            <person name="Peden J.F."/>
            <person name="Dodson R.J."/>
            <person name="Nelson W.C."/>
            <person name="Gwinn M.L."/>
            <person name="DeBoy R.T."/>
            <person name="Peterson J.D."/>
            <person name="Hickey E.K."/>
            <person name="Haft D.H."/>
            <person name="Salzberg S.L."/>
            <person name="White O."/>
            <person name="Fleischmann R.D."/>
            <person name="Dougherty B.A."/>
            <person name="Mason T.M."/>
            <person name="Ciecko A."/>
            <person name="Parksey D.S."/>
            <person name="Blair E."/>
            <person name="Cittone H."/>
            <person name="Clark E.B."/>
            <person name="Cotton M.D."/>
            <person name="Utterback T.R."/>
            <person name="Khouri H.M."/>
            <person name="Qin H."/>
            <person name="Vamathevan J.J."/>
            <person name="Gill J."/>
            <person name="Scarlato V."/>
            <person name="Masignani V."/>
            <person name="Pizza M."/>
            <person name="Grandi G."/>
            <person name="Sun L."/>
            <person name="Smith H.O."/>
            <person name="Fraser C.M."/>
            <person name="Moxon E.R."/>
            <person name="Rappuoli R."/>
            <person name="Venter J.C."/>
        </authorList>
    </citation>
    <scope>NUCLEOTIDE SEQUENCE [LARGE SCALE GENOMIC DNA]</scope>
    <source>
        <strain>ATCC BAA-335 / MC58</strain>
    </source>
</reference>
<accession>Q9K0M4</accession>
<comment type="function">
    <text evidence="1">NQR complex catalyzes the reduction of ubiquinone-1 to ubiquinol by two successive reactions, coupled with the transport of Na(+) ions from the cytoplasm to the periplasm. NqrA to NqrE are probably involved in the second step, the conversion of ubisemiquinone to ubiquinol.</text>
</comment>
<comment type="catalytic activity">
    <reaction evidence="1">
        <text>a ubiquinone + n Na(+)(in) + NADH + H(+) = a ubiquinol + n Na(+)(out) + NAD(+)</text>
        <dbReference type="Rhea" id="RHEA:47748"/>
        <dbReference type="Rhea" id="RHEA-COMP:9565"/>
        <dbReference type="Rhea" id="RHEA-COMP:9566"/>
        <dbReference type="ChEBI" id="CHEBI:15378"/>
        <dbReference type="ChEBI" id="CHEBI:16389"/>
        <dbReference type="ChEBI" id="CHEBI:17976"/>
        <dbReference type="ChEBI" id="CHEBI:29101"/>
        <dbReference type="ChEBI" id="CHEBI:57540"/>
        <dbReference type="ChEBI" id="CHEBI:57945"/>
        <dbReference type="EC" id="7.2.1.1"/>
    </reaction>
</comment>
<comment type="cofactor">
    <cofactor evidence="1">
        <name>FMN</name>
        <dbReference type="ChEBI" id="CHEBI:58210"/>
    </cofactor>
</comment>
<comment type="subunit">
    <text evidence="1">Composed of six subunits; NqrA, NqrB, NqrC, NqrD, NqrE and NqrF.</text>
</comment>
<comment type="subcellular location">
    <subcellularLocation>
        <location evidence="1">Cell inner membrane</location>
        <topology evidence="1">Multi-pass membrane protein</topology>
    </subcellularLocation>
</comment>
<comment type="similarity">
    <text evidence="1">Belongs to the NqrB/RnfD family.</text>
</comment>
<dbReference type="EC" id="7.2.1.1" evidence="1"/>
<dbReference type="EMBL" id="AE002098">
    <property type="protein sequence ID" value="AAF40996.1"/>
    <property type="molecule type" value="Genomic_DNA"/>
</dbReference>
<dbReference type="PIR" id="C81185">
    <property type="entry name" value="C81185"/>
</dbReference>
<dbReference type="RefSeq" id="NP_273612.1">
    <property type="nucleotide sequence ID" value="NC_003112.2"/>
</dbReference>
<dbReference type="RefSeq" id="WP_002225562.1">
    <property type="nucleotide sequence ID" value="NC_003112.2"/>
</dbReference>
<dbReference type="SMR" id="Q9K0M4"/>
<dbReference type="FunCoup" id="Q9K0M4">
    <property type="interactions" value="41"/>
</dbReference>
<dbReference type="STRING" id="122586.NMB0568"/>
<dbReference type="PaxDb" id="122586-NMB0568"/>
<dbReference type="KEGG" id="nme:NMB0568"/>
<dbReference type="PATRIC" id="fig|122586.8.peg.727"/>
<dbReference type="HOGENOM" id="CLU_042020_1_1_4"/>
<dbReference type="InParanoid" id="Q9K0M4"/>
<dbReference type="OrthoDB" id="9776359at2"/>
<dbReference type="Proteomes" id="UP000000425">
    <property type="component" value="Chromosome"/>
</dbReference>
<dbReference type="GO" id="GO:0005886">
    <property type="term" value="C:plasma membrane"/>
    <property type="evidence" value="ECO:0000318"/>
    <property type="project" value="GO_Central"/>
</dbReference>
<dbReference type="GO" id="GO:0010181">
    <property type="term" value="F:FMN binding"/>
    <property type="evidence" value="ECO:0007669"/>
    <property type="project" value="InterPro"/>
</dbReference>
<dbReference type="GO" id="GO:0016655">
    <property type="term" value="F:oxidoreductase activity, acting on NAD(P)H, quinone or similar compound as acceptor"/>
    <property type="evidence" value="ECO:0007669"/>
    <property type="project" value="UniProtKB-UniRule"/>
</dbReference>
<dbReference type="GO" id="GO:0022904">
    <property type="term" value="P:respiratory electron transport chain"/>
    <property type="evidence" value="ECO:0007669"/>
    <property type="project" value="InterPro"/>
</dbReference>
<dbReference type="GO" id="GO:0006814">
    <property type="term" value="P:sodium ion transport"/>
    <property type="evidence" value="ECO:0007669"/>
    <property type="project" value="UniProtKB-UniRule"/>
</dbReference>
<dbReference type="GO" id="GO:0055085">
    <property type="term" value="P:transmembrane transport"/>
    <property type="evidence" value="ECO:0007669"/>
    <property type="project" value="InterPro"/>
</dbReference>
<dbReference type="HAMAP" id="MF_00426">
    <property type="entry name" value="NqrB"/>
    <property type="match status" value="1"/>
</dbReference>
<dbReference type="InterPro" id="IPR010966">
    <property type="entry name" value="NqrB"/>
</dbReference>
<dbReference type="InterPro" id="IPR004338">
    <property type="entry name" value="NqrB/RnfD"/>
</dbReference>
<dbReference type="NCBIfam" id="TIGR01937">
    <property type="entry name" value="nqrB"/>
    <property type="match status" value="1"/>
</dbReference>
<dbReference type="NCBIfam" id="NF003756">
    <property type="entry name" value="PRK05349.1"/>
    <property type="match status" value="1"/>
</dbReference>
<dbReference type="PANTHER" id="PTHR30578">
    <property type="entry name" value="ELECTRON TRANSPORT COMPLEX PROTEIN RNFD"/>
    <property type="match status" value="1"/>
</dbReference>
<dbReference type="PANTHER" id="PTHR30578:SF1">
    <property type="entry name" value="NA(+)-TRANSLOCATING NADH-QUINONE REDUCTASE SUBUNIT B"/>
    <property type="match status" value="1"/>
</dbReference>
<dbReference type="Pfam" id="PF03116">
    <property type="entry name" value="NQR2_RnfD_RnfE"/>
    <property type="match status" value="1"/>
</dbReference>
<dbReference type="PIRSF" id="PIRSF016055">
    <property type="entry name" value="NADH-UbQ_OxRdtase_B_su"/>
    <property type="match status" value="1"/>
</dbReference>
<proteinExistence type="inferred from homology"/>
<sequence>MGLKHFLEKIEPHFLPGGKHEKWYALYEAAATIFYTSGAVTRKAAHVRDALDSKRMMILVWLALFPAMFYGMYNVGAQAFGALTPDLLQQNIANDWHYAFANALGINMSSEAGVSDKMLFGAIYFLPIYATVFVVGGFWEVLFATVRKHEINEGFFVTSILFALIVPPTLPLWQAALGISFGVVVAKEVFGGTGKNFMNPALAGRAFLFFAYPANLSGDAVWTAVDGYSGATALAQWAAHGADGLKNAVTGQTITWMDAFIGKLPGSIGEVSTLALLIGGAFIVFARIASWRIIAGVMIGMIAMSSLFNFIGSDTNAMFAMPWYWHLVVGGFAIGMLFMATDPVSASFTNVGKWWYGALIGVMCVLIRVVNPAYPEGMMLAILFANLFAPIFDYFVAQANIKRRKARSNG</sequence>
<evidence type="ECO:0000255" key="1">
    <source>
        <dbReference type="HAMAP-Rule" id="MF_00426"/>
    </source>
</evidence>
<gene>
    <name evidence="1" type="primary">nqrB</name>
    <name type="ordered locus">NMB0568</name>
</gene>
<organism>
    <name type="scientific">Neisseria meningitidis serogroup B (strain ATCC BAA-335 / MC58)</name>
    <dbReference type="NCBI Taxonomy" id="122586"/>
    <lineage>
        <taxon>Bacteria</taxon>
        <taxon>Pseudomonadati</taxon>
        <taxon>Pseudomonadota</taxon>
        <taxon>Betaproteobacteria</taxon>
        <taxon>Neisseriales</taxon>
        <taxon>Neisseriaceae</taxon>
        <taxon>Neisseria</taxon>
    </lineage>
</organism>
<feature type="chain" id="PRO_0000074439" description="Na(+)-translocating NADH-quinone reductase subunit B">
    <location>
        <begin position="1"/>
        <end position="410"/>
    </location>
</feature>
<feature type="transmembrane region" description="Helical" evidence="1">
    <location>
        <begin position="56"/>
        <end position="76"/>
    </location>
</feature>
<feature type="transmembrane region" description="Helical" evidence="1">
    <location>
        <begin position="119"/>
        <end position="139"/>
    </location>
</feature>
<feature type="transmembrane region" description="Helical" evidence="1">
    <location>
        <begin position="159"/>
        <end position="179"/>
    </location>
</feature>
<feature type="transmembrane region" description="Helical" evidence="1">
    <location>
        <begin position="266"/>
        <end position="286"/>
    </location>
</feature>
<feature type="transmembrane region" description="Helical" evidence="1">
    <location>
        <begin position="293"/>
        <end position="313"/>
    </location>
</feature>
<feature type="transmembrane region" description="Helical" evidence="1">
    <location>
        <begin position="318"/>
        <end position="338"/>
    </location>
</feature>
<feature type="transmembrane region" description="Helical" evidence="1">
    <location>
        <begin position="347"/>
        <end position="367"/>
    </location>
</feature>
<feature type="transmembrane region" description="Helical" evidence="1">
    <location>
        <begin position="377"/>
        <end position="397"/>
    </location>
</feature>
<feature type="modified residue" description="FMN phosphoryl threonine" evidence="1">
    <location>
        <position position="232"/>
    </location>
</feature>
<protein>
    <recommendedName>
        <fullName evidence="1">Na(+)-translocating NADH-quinone reductase subunit B</fullName>
        <shortName evidence="1">Na(+)-NQR subunit B</shortName>
        <shortName evidence="1">Na(+)-translocating NQR subunit B</shortName>
        <ecNumber evidence="1">7.2.1.1</ecNumber>
    </recommendedName>
    <alternativeName>
        <fullName evidence="1">NQR complex subunit B</fullName>
    </alternativeName>
    <alternativeName>
        <fullName evidence="1">NQR-1 subunit B</fullName>
    </alternativeName>
</protein>
<keyword id="KW-0997">Cell inner membrane</keyword>
<keyword id="KW-1003">Cell membrane</keyword>
<keyword id="KW-0285">Flavoprotein</keyword>
<keyword id="KW-0288">FMN</keyword>
<keyword id="KW-0406">Ion transport</keyword>
<keyword id="KW-0472">Membrane</keyword>
<keyword id="KW-0520">NAD</keyword>
<keyword id="KW-0597">Phosphoprotein</keyword>
<keyword id="KW-1185">Reference proteome</keyword>
<keyword id="KW-0915">Sodium</keyword>
<keyword id="KW-0739">Sodium transport</keyword>
<keyword id="KW-1278">Translocase</keyword>
<keyword id="KW-0812">Transmembrane</keyword>
<keyword id="KW-1133">Transmembrane helix</keyword>
<keyword id="KW-0813">Transport</keyword>
<keyword id="KW-0830">Ubiquinone</keyword>